<accession>A0Q6K3</accession>
<proteinExistence type="inferred from homology"/>
<dbReference type="EC" id="1.1.1.37" evidence="1"/>
<dbReference type="EMBL" id="CP000439">
    <property type="protein sequence ID" value="ABK89868.1"/>
    <property type="molecule type" value="Genomic_DNA"/>
</dbReference>
<dbReference type="RefSeq" id="WP_003039393.1">
    <property type="nucleotide sequence ID" value="NZ_CP009633.1"/>
</dbReference>
<dbReference type="SMR" id="A0Q6K3"/>
<dbReference type="KEGG" id="ftn:FTN_0980"/>
<dbReference type="KEGG" id="ftx:AW25_1032"/>
<dbReference type="BioCyc" id="FTUL401614:G1G75-1020-MONOMER"/>
<dbReference type="Proteomes" id="UP000000762">
    <property type="component" value="Chromosome"/>
</dbReference>
<dbReference type="GO" id="GO:0004459">
    <property type="term" value="F:L-lactate dehydrogenase activity"/>
    <property type="evidence" value="ECO:0007669"/>
    <property type="project" value="TreeGrafter"/>
</dbReference>
<dbReference type="GO" id="GO:0030060">
    <property type="term" value="F:L-malate dehydrogenase (NAD+) activity"/>
    <property type="evidence" value="ECO:0007669"/>
    <property type="project" value="UniProtKB-UniRule"/>
</dbReference>
<dbReference type="GO" id="GO:0006089">
    <property type="term" value="P:lactate metabolic process"/>
    <property type="evidence" value="ECO:0007669"/>
    <property type="project" value="TreeGrafter"/>
</dbReference>
<dbReference type="GO" id="GO:0006099">
    <property type="term" value="P:tricarboxylic acid cycle"/>
    <property type="evidence" value="ECO:0007669"/>
    <property type="project" value="UniProtKB-UniRule"/>
</dbReference>
<dbReference type="CDD" id="cd01339">
    <property type="entry name" value="LDH-like_MDH"/>
    <property type="match status" value="1"/>
</dbReference>
<dbReference type="FunFam" id="3.40.50.720:FF:000018">
    <property type="entry name" value="Malate dehydrogenase"/>
    <property type="match status" value="1"/>
</dbReference>
<dbReference type="FunFam" id="3.90.110.10:FF:000004">
    <property type="entry name" value="Malate dehydrogenase"/>
    <property type="match status" value="1"/>
</dbReference>
<dbReference type="Gene3D" id="3.90.110.10">
    <property type="entry name" value="Lactate dehydrogenase/glycoside hydrolase, family 4, C-terminal"/>
    <property type="match status" value="1"/>
</dbReference>
<dbReference type="Gene3D" id="3.40.50.720">
    <property type="entry name" value="NAD(P)-binding Rossmann-like Domain"/>
    <property type="match status" value="1"/>
</dbReference>
<dbReference type="HAMAP" id="MF_00487">
    <property type="entry name" value="Malate_dehydrog_3"/>
    <property type="match status" value="1"/>
</dbReference>
<dbReference type="InterPro" id="IPR001557">
    <property type="entry name" value="L-lactate/malate_DH"/>
</dbReference>
<dbReference type="InterPro" id="IPR022383">
    <property type="entry name" value="Lactate/malate_DH_C"/>
</dbReference>
<dbReference type="InterPro" id="IPR001236">
    <property type="entry name" value="Lactate/malate_DH_N"/>
</dbReference>
<dbReference type="InterPro" id="IPR015955">
    <property type="entry name" value="Lactate_DH/Glyco_Ohase_4_C"/>
</dbReference>
<dbReference type="InterPro" id="IPR011275">
    <property type="entry name" value="Malate_DH_type3"/>
</dbReference>
<dbReference type="InterPro" id="IPR036291">
    <property type="entry name" value="NAD(P)-bd_dom_sf"/>
</dbReference>
<dbReference type="NCBIfam" id="TIGR01763">
    <property type="entry name" value="MalateDH_bact"/>
    <property type="match status" value="1"/>
</dbReference>
<dbReference type="NCBIfam" id="NF004863">
    <property type="entry name" value="PRK06223.1"/>
    <property type="match status" value="1"/>
</dbReference>
<dbReference type="PANTHER" id="PTHR43128">
    <property type="entry name" value="L-2-HYDROXYCARBOXYLATE DEHYDROGENASE (NAD(P)(+))"/>
    <property type="match status" value="1"/>
</dbReference>
<dbReference type="PANTHER" id="PTHR43128:SF16">
    <property type="entry name" value="L-LACTATE DEHYDROGENASE"/>
    <property type="match status" value="1"/>
</dbReference>
<dbReference type="Pfam" id="PF02866">
    <property type="entry name" value="Ldh_1_C"/>
    <property type="match status" value="1"/>
</dbReference>
<dbReference type="Pfam" id="PF00056">
    <property type="entry name" value="Ldh_1_N"/>
    <property type="match status" value="1"/>
</dbReference>
<dbReference type="PIRSF" id="PIRSF000102">
    <property type="entry name" value="Lac_mal_DH"/>
    <property type="match status" value="1"/>
</dbReference>
<dbReference type="PRINTS" id="PR00086">
    <property type="entry name" value="LLDHDRGNASE"/>
</dbReference>
<dbReference type="SUPFAM" id="SSF56327">
    <property type="entry name" value="LDH C-terminal domain-like"/>
    <property type="match status" value="1"/>
</dbReference>
<dbReference type="SUPFAM" id="SSF51735">
    <property type="entry name" value="NAD(P)-binding Rossmann-fold domains"/>
    <property type="match status" value="1"/>
</dbReference>
<name>MDH_FRATN</name>
<organism>
    <name type="scientific">Francisella tularensis subsp. novicida (strain U112)</name>
    <dbReference type="NCBI Taxonomy" id="401614"/>
    <lineage>
        <taxon>Bacteria</taxon>
        <taxon>Pseudomonadati</taxon>
        <taxon>Pseudomonadota</taxon>
        <taxon>Gammaproteobacteria</taxon>
        <taxon>Thiotrichales</taxon>
        <taxon>Francisellaceae</taxon>
        <taxon>Francisella</taxon>
    </lineage>
</organism>
<evidence type="ECO:0000255" key="1">
    <source>
        <dbReference type="HAMAP-Rule" id="MF_00487"/>
    </source>
</evidence>
<gene>
    <name evidence="1" type="primary">mdh</name>
    <name type="ordered locus">FTN_0980</name>
</gene>
<keyword id="KW-0520">NAD</keyword>
<keyword id="KW-0560">Oxidoreductase</keyword>
<keyword id="KW-0816">Tricarboxylic acid cycle</keyword>
<sequence>MARKKIALVGAGNIGGTLAHLALLKQLGDVVLFDIAQGMPNGKALDLLQTCPIEGVDFKVRGTNDYKDLENSDVVIVTAGVPRKPGMSRDDLLGINIKVMQTVGEGIKHNCPNAFVICITNPLDIMVNMLQKFSGVPDNKIVGMAGVLDSARFRTFLADELNVSVQQVQAYVMGGHGDTMVPLTKMSNVAGVSLEQLVKEGKLKQERLDAIVSRTRSGGGEIVALLKTGSAYYAPAAAGIQMAESFLKDKKMILPCAAKVKAGMYGLDEDLFVGVPTEISANGVRPIEVEISDKEREQLQVSINAVKDLNKAAAEILAK</sequence>
<protein>
    <recommendedName>
        <fullName evidence="1">Malate dehydrogenase</fullName>
        <ecNumber evidence="1">1.1.1.37</ecNumber>
    </recommendedName>
</protein>
<reference key="1">
    <citation type="journal article" date="2007" name="Genome Biol.">
        <title>Comparison of Francisella tularensis genomes reveals evolutionary events associated with the emergence of human pathogenic strains.</title>
        <authorList>
            <person name="Rohmer L."/>
            <person name="Fong C."/>
            <person name="Abmayr S."/>
            <person name="Wasnick M."/>
            <person name="Larson Freeman T.J."/>
            <person name="Radey M."/>
            <person name="Guina T."/>
            <person name="Svensson K."/>
            <person name="Hayden H.S."/>
            <person name="Jacobs M."/>
            <person name="Gallagher L.A."/>
            <person name="Manoil C."/>
            <person name="Ernst R.K."/>
            <person name="Drees B."/>
            <person name="Buckley D."/>
            <person name="Haugen E."/>
            <person name="Bovee D."/>
            <person name="Zhou Y."/>
            <person name="Chang J."/>
            <person name="Levy R."/>
            <person name="Lim R."/>
            <person name="Gillett W."/>
            <person name="Guenthener D."/>
            <person name="Kang A."/>
            <person name="Shaffer S.A."/>
            <person name="Taylor G."/>
            <person name="Chen J."/>
            <person name="Gallis B."/>
            <person name="D'Argenio D.A."/>
            <person name="Forsman M."/>
            <person name="Olson M.V."/>
            <person name="Goodlett D.R."/>
            <person name="Kaul R."/>
            <person name="Miller S.I."/>
            <person name="Brittnacher M.J."/>
        </authorList>
    </citation>
    <scope>NUCLEOTIDE SEQUENCE [LARGE SCALE GENOMIC DNA]</scope>
    <source>
        <strain>U112</strain>
    </source>
</reference>
<comment type="function">
    <text evidence="1">Catalyzes the reversible oxidation of malate to oxaloacetate.</text>
</comment>
<comment type="catalytic activity">
    <reaction evidence="1">
        <text>(S)-malate + NAD(+) = oxaloacetate + NADH + H(+)</text>
        <dbReference type="Rhea" id="RHEA:21432"/>
        <dbReference type="ChEBI" id="CHEBI:15378"/>
        <dbReference type="ChEBI" id="CHEBI:15589"/>
        <dbReference type="ChEBI" id="CHEBI:16452"/>
        <dbReference type="ChEBI" id="CHEBI:57540"/>
        <dbReference type="ChEBI" id="CHEBI:57945"/>
        <dbReference type="EC" id="1.1.1.37"/>
    </reaction>
</comment>
<comment type="similarity">
    <text evidence="1">Belongs to the LDH/MDH superfamily. MDH type 3 family.</text>
</comment>
<feature type="chain" id="PRO_1000026473" description="Malate dehydrogenase">
    <location>
        <begin position="1"/>
        <end position="319"/>
    </location>
</feature>
<feature type="active site" description="Proton acceptor" evidence="1">
    <location>
        <position position="176"/>
    </location>
</feature>
<feature type="binding site" evidence="1">
    <location>
        <begin position="10"/>
        <end position="15"/>
    </location>
    <ligand>
        <name>NAD(+)</name>
        <dbReference type="ChEBI" id="CHEBI:57540"/>
    </ligand>
</feature>
<feature type="binding site" evidence="1">
    <location>
        <position position="34"/>
    </location>
    <ligand>
        <name>NAD(+)</name>
        <dbReference type="ChEBI" id="CHEBI:57540"/>
    </ligand>
</feature>
<feature type="binding site" evidence="1">
    <location>
        <position position="83"/>
    </location>
    <ligand>
        <name>substrate</name>
    </ligand>
</feature>
<feature type="binding site" evidence="1">
    <location>
        <position position="89"/>
    </location>
    <ligand>
        <name>substrate</name>
    </ligand>
</feature>
<feature type="binding site" evidence="1">
    <location>
        <position position="96"/>
    </location>
    <ligand>
        <name>NAD(+)</name>
        <dbReference type="ChEBI" id="CHEBI:57540"/>
    </ligand>
</feature>
<feature type="binding site" evidence="1">
    <location>
        <begin position="119"/>
        <end position="121"/>
    </location>
    <ligand>
        <name>NAD(+)</name>
        <dbReference type="ChEBI" id="CHEBI:57540"/>
    </ligand>
</feature>
<feature type="binding site" evidence="1">
    <location>
        <position position="121"/>
    </location>
    <ligand>
        <name>substrate</name>
    </ligand>
</feature>
<feature type="binding site" evidence="1">
    <location>
        <position position="152"/>
    </location>
    <ligand>
        <name>substrate</name>
    </ligand>
</feature>